<proteinExistence type="inferred from homology"/>
<name>PTH_PSEA6</name>
<sequence length="194" mass="21283">MSNIQLIVGLGNPGLEYKYTRHNAGTWLVENLARMHNCTLSLQSKFFGYTGRVTIGGQDIRLLIPTTYMNKSGQAVAALAGFYRIPPESILVAYDELDLPPGIAKFKLGGSSSQNGIRDIVSSLGNNKDFYRLRVGIGHPGHKGKVSGYVLGKAPAKEQEQMDAAIDEGVRCIEILIKDDMKKAMNRLHSFKAE</sequence>
<protein>
    <recommendedName>
        <fullName evidence="1">Peptidyl-tRNA hydrolase</fullName>
        <shortName evidence="1">Pth</shortName>
        <ecNumber evidence="1">3.1.1.29</ecNumber>
    </recommendedName>
</protein>
<organism>
    <name type="scientific">Pseudoalteromonas atlantica (strain T6c / ATCC BAA-1087)</name>
    <dbReference type="NCBI Taxonomy" id="3042615"/>
    <lineage>
        <taxon>Bacteria</taxon>
        <taxon>Pseudomonadati</taxon>
        <taxon>Pseudomonadota</taxon>
        <taxon>Gammaproteobacteria</taxon>
        <taxon>Alteromonadales</taxon>
        <taxon>Alteromonadaceae</taxon>
        <taxon>Paraglaciecola</taxon>
    </lineage>
</organism>
<accession>Q15SQ2</accession>
<comment type="function">
    <text evidence="1">Hydrolyzes ribosome-free peptidyl-tRNAs (with 1 or more amino acids incorporated), which drop off the ribosome during protein synthesis, or as a result of ribosome stalling.</text>
</comment>
<comment type="function">
    <text evidence="1">Catalyzes the release of premature peptidyl moieties from peptidyl-tRNA molecules trapped in stalled 50S ribosomal subunits, and thus maintains levels of free tRNAs and 50S ribosomes.</text>
</comment>
<comment type="catalytic activity">
    <reaction evidence="1">
        <text>an N-acyl-L-alpha-aminoacyl-tRNA + H2O = an N-acyl-L-amino acid + a tRNA + H(+)</text>
        <dbReference type="Rhea" id="RHEA:54448"/>
        <dbReference type="Rhea" id="RHEA-COMP:10123"/>
        <dbReference type="Rhea" id="RHEA-COMP:13883"/>
        <dbReference type="ChEBI" id="CHEBI:15377"/>
        <dbReference type="ChEBI" id="CHEBI:15378"/>
        <dbReference type="ChEBI" id="CHEBI:59874"/>
        <dbReference type="ChEBI" id="CHEBI:78442"/>
        <dbReference type="ChEBI" id="CHEBI:138191"/>
        <dbReference type="EC" id="3.1.1.29"/>
    </reaction>
</comment>
<comment type="subunit">
    <text evidence="1">Monomer.</text>
</comment>
<comment type="subcellular location">
    <subcellularLocation>
        <location evidence="1">Cytoplasm</location>
    </subcellularLocation>
</comment>
<comment type="similarity">
    <text evidence="1">Belongs to the PTH family.</text>
</comment>
<dbReference type="EC" id="3.1.1.29" evidence="1"/>
<dbReference type="EMBL" id="CP000388">
    <property type="protein sequence ID" value="ABG41086.1"/>
    <property type="molecule type" value="Genomic_DNA"/>
</dbReference>
<dbReference type="RefSeq" id="WP_006990498.1">
    <property type="nucleotide sequence ID" value="NC_008228.1"/>
</dbReference>
<dbReference type="SMR" id="Q15SQ2"/>
<dbReference type="STRING" id="342610.Patl_2570"/>
<dbReference type="KEGG" id="pat:Patl_2570"/>
<dbReference type="eggNOG" id="COG0193">
    <property type="taxonomic scope" value="Bacteria"/>
</dbReference>
<dbReference type="HOGENOM" id="CLU_062456_3_1_6"/>
<dbReference type="OrthoDB" id="9800507at2"/>
<dbReference type="Proteomes" id="UP000001981">
    <property type="component" value="Chromosome"/>
</dbReference>
<dbReference type="GO" id="GO:0005737">
    <property type="term" value="C:cytoplasm"/>
    <property type="evidence" value="ECO:0007669"/>
    <property type="project" value="UniProtKB-SubCell"/>
</dbReference>
<dbReference type="GO" id="GO:0004045">
    <property type="term" value="F:peptidyl-tRNA hydrolase activity"/>
    <property type="evidence" value="ECO:0007669"/>
    <property type="project" value="UniProtKB-UniRule"/>
</dbReference>
<dbReference type="GO" id="GO:0000049">
    <property type="term" value="F:tRNA binding"/>
    <property type="evidence" value="ECO:0007669"/>
    <property type="project" value="UniProtKB-UniRule"/>
</dbReference>
<dbReference type="GO" id="GO:0006515">
    <property type="term" value="P:protein quality control for misfolded or incompletely synthesized proteins"/>
    <property type="evidence" value="ECO:0007669"/>
    <property type="project" value="UniProtKB-UniRule"/>
</dbReference>
<dbReference type="GO" id="GO:0072344">
    <property type="term" value="P:rescue of stalled ribosome"/>
    <property type="evidence" value="ECO:0007669"/>
    <property type="project" value="UniProtKB-UniRule"/>
</dbReference>
<dbReference type="CDD" id="cd00462">
    <property type="entry name" value="PTH"/>
    <property type="match status" value="1"/>
</dbReference>
<dbReference type="FunFam" id="3.40.50.1470:FF:000001">
    <property type="entry name" value="Peptidyl-tRNA hydrolase"/>
    <property type="match status" value="1"/>
</dbReference>
<dbReference type="Gene3D" id="3.40.50.1470">
    <property type="entry name" value="Peptidyl-tRNA hydrolase"/>
    <property type="match status" value="1"/>
</dbReference>
<dbReference type="HAMAP" id="MF_00083">
    <property type="entry name" value="Pept_tRNA_hydro_bact"/>
    <property type="match status" value="1"/>
</dbReference>
<dbReference type="InterPro" id="IPR001328">
    <property type="entry name" value="Pept_tRNA_hydro"/>
</dbReference>
<dbReference type="InterPro" id="IPR018171">
    <property type="entry name" value="Pept_tRNA_hydro_CS"/>
</dbReference>
<dbReference type="InterPro" id="IPR036416">
    <property type="entry name" value="Pept_tRNA_hydro_sf"/>
</dbReference>
<dbReference type="NCBIfam" id="TIGR00447">
    <property type="entry name" value="pth"/>
    <property type="match status" value="1"/>
</dbReference>
<dbReference type="PANTHER" id="PTHR17224">
    <property type="entry name" value="PEPTIDYL-TRNA HYDROLASE"/>
    <property type="match status" value="1"/>
</dbReference>
<dbReference type="PANTHER" id="PTHR17224:SF1">
    <property type="entry name" value="PEPTIDYL-TRNA HYDROLASE"/>
    <property type="match status" value="1"/>
</dbReference>
<dbReference type="Pfam" id="PF01195">
    <property type="entry name" value="Pept_tRNA_hydro"/>
    <property type="match status" value="1"/>
</dbReference>
<dbReference type="SUPFAM" id="SSF53178">
    <property type="entry name" value="Peptidyl-tRNA hydrolase-like"/>
    <property type="match status" value="1"/>
</dbReference>
<dbReference type="PROSITE" id="PS01195">
    <property type="entry name" value="PEPT_TRNA_HYDROL_1"/>
    <property type="match status" value="1"/>
</dbReference>
<reference key="1">
    <citation type="submission" date="2006-06" db="EMBL/GenBank/DDBJ databases">
        <title>Complete sequence of Pseudoalteromonas atlantica T6c.</title>
        <authorList>
            <consortium name="US DOE Joint Genome Institute"/>
            <person name="Copeland A."/>
            <person name="Lucas S."/>
            <person name="Lapidus A."/>
            <person name="Barry K."/>
            <person name="Detter J.C."/>
            <person name="Glavina del Rio T."/>
            <person name="Hammon N."/>
            <person name="Israni S."/>
            <person name="Dalin E."/>
            <person name="Tice H."/>
            <person name="Pitluck S."/>
            <person name="Saunders E."/>
            <person name="Brettin T."/>
            <person name="Bruce D."/>
            <person name="Han C."/>
            <person name="Tapia R."/>
            <person name="Gilna P."/>
            <person name="Schmutz J."/>
            <person name="Larimer F."/>
            <person name="Land M."/>
            <person name="Hauser L."/>
            <person name="Kyrpides N."/>
            <person name="Kim E."/>
            <person name="Karls A.C."/>
            <person name="Bartlett D."/>
            <person name="Higgins B.P."/>
            <person name="Richardson P."/>
        </authorList>
    </citation>
    <scope>NUCLEOTIDE SEQUENCE [LARGE SCALE GENOMIC DNA]</scope>
    <source>
        <strain>T6c / ATCC BAA-1087</strain>
    </source>
</reference>
<feature type="chain" id="PRO_0000264077" description="Peptidyl-tRNA hydrolase">
    <location>
        <begin position="1"/>
        <end position="194"/>
    </location>
</feature>
<feature type="active site" description="Proton acceptor" evidence="1">
    <location>
        <position position="22"/>
    </location>
</feature>
<feature type="binding site" evidence="1">
    <location>
        <position position="17"/>
    </location>
    <ligand>
        <name>tRNA</name>
        <dbReference type="ChEBI" id="CHEBI:17843"/>
    </ligand>
</feature>
<feature type="binding site" evidence="1">
    <location>
        <position position="68"/>
    </location>
    <ligand>
        <name>tRNA</name>
        <dbReference type="ChEBI" id="CHEBI:17843"/>
    </ligand>
</feature>
<feature type="binding site" evidence="1">
    <location>
        <position position="70"/>
    </location>
    <ligand>
        <name>tRNA</name>
        <dbReference type="ChEBI" id="CHEBI:17843"/>
    </ligand>
</feature>
<feature type="binding site" evidence="1">
    <location>
        <position position="115"/>
    </location>
    <ligand>
        <name>tRNA</name>
        <dbReference type="ChEBI" id="CHEBI:17843"/>
    </ligand>
</feature>
<feature type="site" description="Discriminates between blocked and unblocked aminoacyl-tRNA" evidence="1">
    <location>
        <position position="12"/>
    </location>
</feature>
<feature type="site" description="Stabilizes the basic form of H active site to accept a proton" evidence="1">
    <location>
        <position position="95"/>
    </location>
</feature>
<evidence type="ECO:0000255" key="1">
    <source>
        <dbReference type="HAMAP-Rule" id="MF_00083"/>
    </source>
</evidence>
<gene>
    <name evidence="1" type="primary">pth</name>
    <name type="ordered locus">Patl_2570</name>
</gene>
<keyword id="KW-0963">Cytoplasm</keyword>
<keyword id="KW-0378">Hydrolase</keyword>
<keyword id="KW-0694">RNA-binding</keyword>
<keyword id="KW-0820">tRNA-binding</keyword>